<gene>
    <name type="primary">Gemin8</name>
    <name type="synonym">Fam51a1</name>
</gene>
<keyword id="KW-0175">Coiled coil</keyword>
<keyword id="KW-0963">Cytoplasm</keyword>
<keyword id="KW-0507">mRNA processing</keyword>
<keyword id="KW-0508">mRNA splicing</keyword>
<keyword id="KW-0539">Nucleus</keyword>
<keyword id="KW-0597">Phosphoprotein</keyword>
<keyword id="KW-1185">Reference proteome</keyword>
<dbReference type="EMBL" id="AK047511">
    <property type="protein sequence ID" value="BAC33077.1"/>
    <property type="molecule type" value="mRNA"/>
</dbReference>
<dbReference type="EMBL" id="AK053774">
    <property type="protein sequence ID" value="BAC35516.1"/>
    <property type="molecule type" value="mRNA"/>
</dbReference>
<dbReference type="EMBL" id="AK160583">
    <property type="protein sequence ID" value="BAE35890.1"/>
    <property type="molecule type" value="mRNA"/>
</dbReference>
<dbReference type="EMBL" id="AL713990">
    <property type="status" value="NOT_ANNOTATED_CDS"/>
    <property type="molecule type" value="Genomic_DNA"/>
</dbReference>
<dbReference type="EMBL" id="BC023488">
    <property type="protein sequence ID" value="AAH23488.1"/>
    <property type="status" value="ALT_INIT"/>
    <property type="molecule type" value="mRNA"/>
</dbReference>
<dbReference type="CCDS" id="CCDS41207.1"/>
<dbReference type="RefSeq" id="NP_001297651.1">
    <property type="nucleotide sequence ID" value="NM_001310722.1"/>
</dbReference>
<dbReference type="RefSeq" id="NP_001297653.1">
    <property type="nucleotide sequence ID" value="NM_001310724.1"/>
</dbReference>
<dbReference type="RefSeq" id="NP_666350.2">
    <property type="nucleotide sequence ID" value="NM_146238.4"/>
</dbReference>
<dbReference type="RefSeq" id="XP_036017838.1">
    <property type="nucleotide sequence ID" value="XM_036161945.1"/>
</dbReference>
<dbReference type="SMR" id="Q8BHE1"/>
<dbReference type="FunCoup" id="Q8BHE1">
    <property type="interactions" value="3751"/>
</dbReference>
<dbReference type="STRING" id="10090.ENSMUSP00000084414"/>
<dbReference type="iPTMnet" id="Q8BHE1"/>
<dbReference type="PhosphoSitePlus" id="Q8BHE1"/>
<dbReference type="PaxDb" id="10090-ENSMUSP00000085137"/>
<dbReference type="PeptideAtlas" id="Q8BHE1"/>
<dbReference type="ProteomicsDB" id="268862"/>
<dbReference type="Pumba" id="Q8BHE1"/>
<dbReference type="Antibodypedia" id="23884">
    <property type="antibodies" value="257 antibodies from 22 providers"/>
</dbReference>
<dbReference type="Ensembl" id="ENSMUST00000056410.11">
    <property type="protein sequence ID" value="ENSMUSP00000085137.4"/>
    <property type="gene ID" value="ENSMUSG00000040621.15"/>
</dbReference>
<dbReference type="Ensembl" id="ENSMUST00000087169.11">
    <property type="protein sequence ID" value="ENSMUSP00000084414.5"/>
    <property type="gene ID" value="ENSMUSG00000040621.15"/>
</dbReference>
<dbReference type="Ensembl" id="ENSMUST00000130880.9">
    <property type="protein sequence ID" value="ENSMUSP00000118482.3"/>
    <property type="gene ID" value="ENSMUSG00000040621.15"/>
</dbReference>
<dbReference type="GeneID" id="237221"/>
<dbReference type="KEGG" id="mmu:237221"/>
<dbReference type="UCSC" id="uc009uwc.1">
    <property type="organism name" value="mouse"/>
</dbReference>
<dbReference type="AGR" id="MGI:2384300"/>
<dbReference type="CTD" id="54960"/>
<dbReference type="MGI" id="MGI:2384300">
    <property type="gene designation" value="Gemin8"/>
</dbReference>
<dbReference type="VEuPathDB" id="HostDB:ENSMUSG00000040621"/>
<dbReference type="eggNOG" id="ENOG502S7KA">
    <property type="taxonomic scope" value="Eukaryota"/>
</dbReference>
<dbReference type="GeneTree" id="ENSGT00390000013608"/>
<dbReference type="HOGENOM" id="CLU_073610_0_0_1"/>
<dbReference type="InParanoid" id="Q8BHE1"/>
<dbReference type="OMA" id="QYFAHTE"/>
<dbReference type="OrthoDB" id="5989213at2759"/>
<dbReference type="PhylomeDB" id="Q8BHE1"/>
<dbReference type="TreeFam" id="TF328591"/>
<dbReference type="Reactome" id="R-MMU-191859">
    <property type="pathway name" value="snRNP Assembly"/>
</dbReference>
<dbReference type="BioGRID-ORCS" id="237221">
    <property type="hits" value="22 hits in 77 CRISPR screens"/>
</dbReference>
<dbReference type="PRO" id="PR:Q8BHE1"/>
<dbReference type="Proteomes" id="UP000000589">
    <property type="component" value="Chromosome X"/>
</dbReference>
<dbReference type="RNAct" id="Q8BHE1">
    <property type="molecule type" value="protein"/>
</dbReference>
<dbReference type="Bgee" id="ENSMUSG00000040621">
    <property type="expression patterns" value="Expressed in animal zygote and 88 other cell types or tissues"/>
</dbReference>
<dbReference type="ExpressionAtlas" id="Q8BHE1">
    <property type="expression patterns" value="baseline and differential"/>
</dbReference>
<dbReference type="GO" id="GO:0005737">
    <property type="term" value="C:cytoplasm"/>
    <property type="evidence" value="ECO:0000250"/>
    <property type="project" value="UniProtKB"/>
</dbReference>
<dbReference type="GO" id="GO:0005829">
    <property type="term" value="C:cytosol"/>
    <property type="evidence" value="ECO:0000250"/>
    <property type="project" value="UniProtKB"/>
</dbReference>
<dbReference type="GO" id="GO:0097504">
    <property type="term" value="C:Gemini of Cajal bodies"/>
    <property type="evidence" value="ECO:0007669"/>
    <property type="project" value="UniProtKB-SubCell"/>
</dbReference>
<dbReference type="GO" id="GO:0005634">
    <property type="term" value="C:nucleus"/>
    <property type="evidence" value="ECO:0000250"/>
    <property type="project" value="UniProtKB"/>
</dbReference>
<dbReference type="GO" id="GO:0032797">
    <property type="term" value="C:SMN complex"/>
    <property type="evidence" value="ECO:0000250"/>
    <property type="project" value="UniProtKB"/>
</dbReference>
<dbReference type="GO" id="GO:0034719">
    <property type="term" value="C:SMN-Sm protein complex"/>
    <property type="evidence" value="ECO:0000250"/>
    <property type="project" value="UniProtKB"/>
</dbReference>
<dbReference type="GO" id="GO:0000387">
    <property type="term" value="P:spliceosomal snRNP assembly"/>
    <property type="evidence" value="ECO:0000250"/>
    <property type="project" value="UniProtKB"/>
</dbReference>
<dbReference type="InterPro" id="IPR034754">
    <property type="entry name" value="GEMIN8"/>
</dbReference>
<dbReference type="PANTHER" id="PTHR16238">
    <property type="entry name" value="GEM-ASSOCIATED PROTEIN 8"/>
    <property type="match status" value="1"/>
</dbReference>
<dbReference type="PANTHER" id="PTHR16238:SF7">
    <property type="entry name" value="GEM-ASSOCIATED PROTEIN 8"/>
    <property type="match status" value="1"/>
</dbReference>
<dbReference type="Pfam" id="PF15348">
    <property type="entry name" value="GEMIN8"/>
    <property type="match status" value="1"/>
</dbReference>
<accession>Q8BHE1</accession>
<accession>B1AVP4</accession>
<accession>Q3TUT1</accession>
<accession>Q8R3W9</accession>
<proteinExistence type="evidence at protein level"/>
<evidence type="ECO:0000250" key="1"/>
<evidence type="ECO:0000250" key="2">
    <source>
        <dbReference type="UniProtKB" id="Q9NWZ8"/>
    </source>
</evidence>
<evidence type="ECO:0000255" key="3"/>
<evidence type="ECO:0000256" key="4">
    <source>
        <dbReference type="SAM" id="MobiDB-lite"/>
    </source>
</evidence>
<evidence type="ECO:0000269" key="5">
    <source>
    </source>
</evidence>
<evidence type="ECO:0000305" key="6"/>
<organism>
    <name type="scientific">Mus musculus</name>
    <name type="common">Mouse</name>
    <dbReference type="NCBI Taxonomy" id="10090"/>
    <lineage>
        <taxon>Eukaryota</taxon>
        <taxon>Metazoa</taxon>
        <taxon>Chordata</taxon>
        <taxon>Craniata</taxon>
        <taxon>Vertebrata</taxon>
        <taxon>Euteleostomi</taxon>
        <taxon>Mammalia</taxon>
        <taxon>Eutheria</taxon>
        <taxon>Euarchontoglires</taxon>
        <taxon>Glires</taxon>
        <taxon>Rodentia</taxon>
        <taxon>Myomorpha</taxon>
        <taxon>Muroidea</taxon>
        <taxon>Muridae</taxon>
        <taxon>Murinae</taxon>
        <taxon>Mus</taxon>
        <taxon>Mus</taxon>
    </lineage>
</organism>
<sequence length="238" mass="28396">MASNWRASASWYSHPVYARYWQHYHHAMLWMQGHQNAYRKFRDSYFTSPWLFPHGALPWNSPAYEAGHPWDSQGQHMAQQESPYRVSHPKSPGQPLRNSSRTQASTRGNEARCEEEELESDSDDEVECDLSNMEITEELRQYFAQTERHREERRRQQQLDAERLNDYVNADHGLYFNHRRSLEPPSEKPWERRQAEMKRLYGNSAPKILAMETAVQLSFDKHCDRKQPKYWPVIPLKF</sequence>
<comment type="function">
    <text evidence="2">The SMN complex catalyzes the assembly of small nuclear ribonucleoproteins (snRNPs), the building blocks of the spliceosome, and thereby plays an important role in the splicing of cellular pre-mRNAs. Most spliceosomal snRNPs contain a common set of Sm proteins SNRPB, SNRPD1, SNRPD2, SNRPD3, SNRPE, SNRPF and SNRPG that assemble in a heptameric protein ring on the Sm site of the small nuclear RNA to form the core snRNP (Sm core). In the cytosol, the Sm proteins SNRPD1, SNRPD2, SNRPE, SNRPF and SNRPG are trapped in an inactive 6S pICln-Sm complex by the chaperone CLNS1A that controls the assembly of the core snRNP. To assemble core snRNPs, the SMN complex accepts the trapped 5Sm proteins from CLNS1A forming an intermediate. Binding of snRNA inside 5Sm triggers eviction of the SMN complex, thereby allowing binding of SNRPD3 and SNRPB to complete assembly of the core snRNP (By similarity).</text>
</comment>
<comment type="subunit">
    <text evidence="2">Part of the core SMN complex that contains SMN1, GEMIN2/SIP1, DDX20/GEMIN3, GEMIN4, GEMIN5, GEMIN6, GEMIN7, GEMIN8 and STRAP/UNRIP (By similarity). Part of the SMN-Sm complex that contains SMN1, GEMIN2/SIP1, DDX20/GEMIN3, GEMIN4, GEMIN5, GEMIN6, GEMIN7, GEMIN8, STRAP/UNRIP and the Sm proteins SNRPB, SNRPD1, SNRPD2, SNRPD3, SNRPE, SNRPF and SNRPG (By similarity). Interacts with GEMIN6; the interaction is direct (By similarity). Interacts with GEMIN7; the interaction is direct (By similarity). Interacts with SMN1; the interaction is direct (By similarity). Interacts with GEMIN4; the interaction is direct (By similarity).</text>
</comment>
<comment type="subcellular location">
    <subcellularLocation>
        <location evidence="2">Nucleus</location>
        <location evidence="2">Gem</location>
    </subcellularLocation>
    <subcellularLocation>
        <location evidence="2">Cytoplasm</location>
    </subcellularLocation>
    <text evidence="1">Found in nuclear bodies called gems (Gemini of Cajal bodies) that are often in proximity to Cajal (coiled) bodies. Also found in the cytoplasm (By similarity).</text>
</comment>
<comment type="tissue specificity">
    <text evidence="5">Widely expressed in embryonic tissues (at protein level).</text>
</comment>
<comment type="sequence caution" evidence="6">
    <conflict type="erroneous initiation">
        <sequence resource="EMBL-CDS" id="AAH23488"/>
    </conflict>
    <text>Truncated N-terminus.</text>
</comment>
<name>GEMI8_MOUSE</name>
<protein>
    <recommendedName>
        <fullName>Gem-associated protein 8</fullName>
        <shortName>Gemin-8</shortName>
    </recommendedName>
    <alternativeName>
        <fullName>Protein FAM51A1</fullName>
    </alternativeName>
</protein>
<reference key="1">
    <citation type="journal article" date="2005" name="Science">
        <title>The transcriptional landscape of the mammalian genome.</title>
        <authorList>
            <person name="Carninci P."/>
            <person name="Kasukawa T."/>
            <person name="Katayama S."/>
            <person name="Gough J."/>
            <person name="Frith M.C."/>
            <person name="Maeda N."/>
            <person name="Oyama R."/>
            <person name="Ravasi T."/>
            <person name="Lenhard B."/>
            <person name="Wells C."/>
            <person name="Kodzius R."/>
            <person name="Shimokawa K."/>
            <person name="Bajic V.B."/>
            <person name="Brenner S.E."/>
            <person name="Batalov S."/>
            <person name="Forrest A.R."/>
            <person name="Zavolan M."/>
            <person name="Davis M.J."/>
            <person name="Wilming L.G."/>
            <person name="Aidinis V."/>
            <person name="Allen J.E."/>
            <person name="Ambesi-Impiombato A."/>
            <person name="Apweiler R."/>
            <person name="Aturaliya R.N."/>
            <person name="Bailey T.L."/>
            <person name="Bansal M."/>
            <person name="Baxter L."/>
            <person name="Beisel K.W."/>
            <person name="Bersano T."/>
            <person name="Bono H."/>
            <person name="Chalk A.M."/>
            <person name="Chiu K.P."/>
            <person name="Choudhary V."/>
            <person name="Christoffels A."/>
            <person name="Clutterbuck D.R."/>
            <person name="Crowe M.L."/>
            <person name="Dalla E."/>
            <person name="Dalrymple B.P."/>
            <person name="de Bono B."/>
            <person name="Della Gatta G."/>
            <person name="di Bernardo D."/>
            <person name="Down T."/>
            <person name="Engstrom P."/>
            <person name="Fagiolini M."/>
            <person name="Faulkner G."/>
            <person name="Fletcher C.F."/>
            <person name="Fukushima T."/>
            <person name="Furuno M."/>
            <person name="Futaki S."/>
            <person name="Gariboldi M."/>
            <person name="Georgii-Hemming P."/>
            <person name="Gingeras T.R."/>
            <person name="Gojobori T."/>
            <person name="Green R.E."/>
            <person name="Gustincich S."/>
            <person name="Harbers M."/>
            <person name="Hayashi Y."/>
            <person name="Hensch T.K."/>
            <person name="Hirokawa N."/>
            <person name="Hill D."/>
            <person name="Huminiecki L."/>
            <person name="Iacono M."/>
            <person name="Ikeo K."/>
            <person name="Iwama A."/>
            <person name="Ishikawa T."/>
            <person name="Jakt M."/>
            <person name="Kanapin A."/>
            <person name="Katoh M."/>
            <person name="Kawasawa Y."/>
            <person name="Kelso J."/>
            <person name="Kitamura H."/>
            <person name="Kitano H."/>
            <person name="Kollias G."/>
            <person name="Krishnan S.P."/>
            <person name="Kruger A."/>
            <person name="Kummerfeld S.K."/>
            <person name="Kurochkin I.V."/>
            <person name="Lareau L.F."/>
            <person name="Lazarevic D."/>
            <person name="Lipovich L."/>
            <person name="Liu J."/>
            <person name="Liuni S."/>
            <person name="McWilliam S."/>
            <person name="Madan Babu M."/>
            <person name="Madera M."/>
            <person name="Marchionni L."/>
            <person name="Matsuda H."/>
            <person name="Matsuzawa S."/>
            <person name="Miki H."/>
            <person name="Mignone F."/>
            <person name="Miyake S."/>
            <person name="Morris K."/>
            <person name="Mottagui-Tabar S."/>
            <person name="Mulder N."/>
            <person name="Nakano N."/>
            <person name="Nakauchi H."/>
            <person name="Ng P."/>
            <person name="Nilsson R."/>
            <person name="Nishiguchi S."/>
            <person name="Nishikawa S."/>
            <person name="Nori F."/>
            <person name="Ohara O."/>
            <person name="Okazaki Y."/>
            <person name="Orlando V."/>
            <person name="Pang K.C."/>
            <person name="Pavan W.J."/>
            <person name="Pavesi G."/>
            <person name="Pesole G."/>
            <person name="Petrovsky N."/>
            <person name="Piazza S."/>
            <person name="Reed J."/>
            <person name="Reid J.F."/>
            <person name="Ring B.Z."/>
            <person name="Ringwald M."/>
            <person name="Rost B."/>
            <person name="Ruan Y."/>
            <person name="Salzberg S.L."/>
            <person name="Sandelin A."/>
            <person name="Schneider C."/>
            <person name="Schoenbach C."/>
            <person name="Sekiguchi K."/>
            <person name="Semple C.A."/>
            <person name="Seno S."/>
            <person name="Sessa L."/>
            <person name="Sheng Y."/>
            <person name="Shibata Y."/>
            <person name="Shimada H."/>
            <person name="Shimada K."/>
            <person name="Silva D."/>
            <person name="Sinclair B."/>
            <person name="Sperling S."/>
            <person name="Stupka E."/>
            <person name="Sugiura K."/>
            <person name="Sultana R."/>
            <person name="Takenaka Y."/>
            <person name="Taki K."/>
            <person name="Tammoja K."/>
            <person name="Tan S.L."/>
            <person name="Tang S."/>
            <person name="Taylor M.S."/>
            <person name="Tegner J."/>
            <person name="Teichmann S.A."/>
            <person name="Ueda H.R."/>
            <person name="van Nimwegen E."/>
            <person name="Verardo R."/>
            <person name="Wei C.L."/>
            <person name="Yagi K."/>
            <person name="Yamanishi H."/>
            <person name="Zabarovsky E."/>
            <person name="Zhu S."/>
            <person name="Zimmer A."/>
            <person name="Hide W."/>
            <person name="Bult C."/>
            <person name="Grimmond S.M."/>
            <person name="Teasdale R.D."/>
            <person name="Liu E.T."/>
            <person name="Brusic V."/>
            <person name="Quackenbush J."/>
            <person name="Wahlestedt C."/>
            <person name="Mattick J.S."/>
            <person name="Hume D.A."/>
            <person name="Kai C."/>
            <person name="Sasaki D."/>
            <person name="Tomaru Y."/>
            <person name="Fukuda S."/>
            <person name="Kanamori-Katayama M."/>
            <person name="Suzuki M."/>
            <person name="Aoki J."/>
            <person name="Arakawa T."/>
            <person name="Iida J."/>
            <person name="Imamura K."/>
            <person name="Itoh M."/>
            <person name="Kato T."/>
            <person name="Kawaji H."/>
            <person name="Kawagashira N."/>
            <person name="Kawashima T."/>
            <person name="Kojima M."/>
            <person name="Kondo S."/>
            <person name="Konno H."/>
            <person name="Nakano K."/>
            <person name="Ninomiya N."/>
            <person name="Nishio T."/>
            <person name="Okada M."/>
            <person name="Plessy C."/>
            <person name="Shibata K."/>
            <person name="Shiraki T."/>
            <person name="Suzuki S."/>
            <person name="Tagami M."/>
            <person name="Waki K."/>
            <person name="Watahiki A."/>
            <person name="Okamura-Oho Y."/>
            <person name="Suzuki H."/>
            <person name="Kawai J."/>
            <person name="Hayashizaki Y."/>
        </authorList>
    </citation>
    <scope>NUCLEOTIDE SEQUENCE [LARGE SCALE MRNA]</scope>
    <source>
        <strain>C57BL/6J</strain>
        <tissue>Cerebellum</tissue>
        <tissue>Eye</tissue>
    </source>
</reference>
<reference key="2">
    <citation type="journal article" date="2009" name="PLoS Biol.">
        <title>Lineage-specific biology revealed by a finished genome assembly of the mouse.</title>
        <authorList>
            <person name="Church D.M."/>
            <person name="Goodstadt L."/>
            <person name="Hillier L.W."/>
            <person name="Zody M.C."/>
            <person name="Goldstein S."/>
            <person name="She X."/>
            <person name="Bult C.J."/>
            <person name="Agarwala R."/>
            <person name="Cherry J.L."/>
            <person name="DiCuccio M."/>
            <person name="Hlavina W."/>
            <person name="Kapustin Y."/>
            <person name="Meric P."/>
            <person name="Maglott D."/>
            <person name="Birtle Z."/>
            <person name="Marques A.C."/>
            <person name="Graves T."/>
            <person name="Zhou S."/>
            <person name="Teague B."/>
            <person name="Potamousis K."/>
            <person name="Churas C."/>
            <person name="Place M."/>
            <person name="Herschleb J."/>
            <person name="Runnheim R."/>
            <person name="Forrest D."/>
            <person name="Amos-Landgraf J."/>
            <person name="Schwartz D.C."/>
            <person name="Cheng Z."/>
            <person name="Lindblad-Toh K."/>
            <person name="Eichler E.E."/>
            <person name="Ponting C.P."/>
        </authorList>
    </citation>
    <scope>NUCLEOTIDE SEQUENCE [LARGE SCALE GENOMIC DNA]</scope>
    <source>
        <strain>C57BL/6J</strain>
    </source>
</reference>
<reference key="3">
    <citation type="journal article" date="2004" name="Genome Res.">
        <title>The status, quality, and expansion of the NIH full-length cDNA project: the Mammalian Gene Collection (MGC).</title>
        <authorList>
            <consortium name="The MGC Project Team"/>
        </authorList>
    </citation>
    <scope>NUCLEOTIDE SEQUENCE [LARGE SCALE MRNA]</scope>
    <source>
        <strain>FVB/N-3</strain>
        <tissue>Mammary gland</tissue>
    </source>
</reference>
<reference key="4">
    <citation type="journal article" date="2006" name="J. Biol. Chem.">
        <title>Gemin8 is a novel component of the survival motor neuron complex and functions in small nuclear ribonucleoprotein assembly.</title>
        <authorList>
            <person name="Carissimi C."/>
            <person name="Saieva L."/>
            <person name="Baccon J."/>
            <person name="Chiarella P."/>
            <person name="Maiolica A."/>
            <person name="Sawyer A."/>
            <person name="Rappsilber J."/>
            <person name="Pellizzoni L."/>
        </authorList>
    </citation>
    <scope>TISSUE SPECIFICITY</scope>
</reference>
<feature type="chain" id="PRO_0000087156" description="Gem-associated protein 8">
    <location>
        <begin position="1"/>
        <end position="238"/>
    </location>
</feature>
<feature type="region of interest" description="Disordered" evidence="4">
    <location>
        <begin position="66"/>
        <end position="127"/>
    </location>
</feature>
<feature type="coiled-coil region" evidence="3">
    <location>
        <begin position="131"/>
        <end position="164"/>
    </location>
</feature>
<feature type="compositionally biased region" description="Polar residues" evidence="4">
    <location>
        <begin position="72"/>
        <end position="82"/>
    </location>
</feature>
<feature type="compositionally biased region" description="Polar residues" evidence="4">
    <location>
        <begin position="96"/>
        <end position="108"/>
    </location>
</feature>
<feature type="compositionally biased region" description="Acidic residues" evidence="4">
    <location>
        <begin position="113"/>
        <end position="127"/>
    </location>
</feature>
<feature type="modified residue" description="Phosphoserine" evidence="2">
    <location>
        <position position="122"/>
    </location>
</feature>
<feature type="sequence conflict" description="In Ref. 3; AAH23488." evidence="6" ref="3">
    <original>R</original>
    <variation>H</variation>
    <location>
        <position position="97"/>
    </location>
</feature>
<feature type="sequence conflict" description="In Ref. 3; AAH23488." evidence="6" ref="3">
    <original>D</original>
    <variation>Y</variation>
    <location>
        <position position="166"/>
    </location>
</feature>